<reference key="1">
    <citation type="journal article" date="2011" name="Stand. Genomic Sci.">
        <title>Complete genome sequence of the halophilic and highly halotolerant Chromohalobacter salexigens type strain (1H11(T)).</title>
        <authorList>
            <person name="Copeland A."/>
            <person name="O'Connor K."/>
            <person name="Lucas S."/>
            <person name="Lapidus A."/>
            <person name="Berry K.W."/>
            <person name="Detter J.C."/>
            <person name="Del Rio T.G."/>
            <person name="Hammon N."/>
            <person name="Dalin E."/>
            <person name="Tice H."/>
            <person name="Pitluck S."/>
            <person name="Bruce D."/>
            <person name="Goodwin L."/>
            <person name="Han C."/>
            <person name="Tapia R."/>
            <person name="Saunders E."/>
            <person name="Schmutz J."/>
            <person name="Brettin T."/>
            <person name="Larimer F."/>
            <person name="Land M."/>
            <person name="Hauser L."/>
            <person name="Vargas C."/>
            <person name="Nieto J.J."/>
            <person name="Kyrpides N.C."/>
            <person name="Ivanova N."/>
            <person name="Goker M."/>
            <person name="Klenk H.P."/>
            <person name="Csonka L.N."/>
            <person name="Woyke T."/>
        </authorList>
    </citation>
    <scope>NUCLEOTIDE SEQUENCE [LARGE SCALE GENOMIC DNA]</scope>
    <source>
        <strain>ATCC BAA-138 / DSM 3043 / CIP 106854 / NCIMB 13768 / 1H11</strain>
    </source>
</reference>
<accession>Q1R0I2</accession>
<name>RPOB_CHRSD</name>
<evidence type="ECO:0000255" key="1">
    <source>
        <dbReference type="HAMAP-Rule" id="MF_01321"/>
    </source>
</evidence>
<comment type="function">
    <text evidence="1">DNA-dependent RNA polymerase catalyzes the transcription of DNA into RNA using the four ribonucleoside triphosphates as substrates.</text>
</comment>
<comment type="catalytic activity">
    <reaction evidence="1">
        <text>RNA(n) + a ribonucleoside 5'-triphosphate = RNA(n+1) + diphosphate</text>
        <dbReference type="Rhea" id="RHEA:21248"/>
        <dbReference type="Rhea" id="RHEA-COMP:14527"/>
        <dbReference type="Rhea" id="RHEA-COMP:17342"/>
        <dbReference type="ChEBI" id="CHEBI:33019"/>
        <dbReference type="ChEBI" id="CHEBI:61557"/>
        <dbReference type="ChEBI" id="CHEBI:140395"/>
        <dbReference type="EC" id="2.7.7.6"/>
    </reaction>
</comment>
<comment type="subunit">
    <text evidence="1">The RNAP catalytic core consists of 2 alpha, 1 beta, 1 beta' and 1 omega subunit. When a sigma factor is associated with the core the holoenzyme is formed, which can initiate transcription.</text>
</comment>
<comment type="similarity">
    <text evidence="1">Belongs to the RNA polymerase beta chain family.</text>
</comment>
<proteinExistence type="inferred from homology"/>
<feature type="chain" id="PRO_0000300299" description="DNA-directed RNA polymerase subunit beta">
    <location>
        <begin position="1"/>
        <end position="1358"/>
    </location>
</feature>
<organism>
    <name type="scientific">Chromohalobacter salexigens (strain ATCC BAA-138 / DSM 3043 / CIP 106854 / NCIMB 13768 / 1H11)</name>
    <dbReference type="NCBI Taxonomy" id="290398"/>
    <lineage>
        <taxon>Bacteria</taxon>
        <taxon>Pseudomonadati</taxon>
        <taxon>Pseudomonadota</taxon>
        <taxon>Gammaproteobacteria</taxon>
        <taxon>Oceanospirillales</taxon>
        <taxon>Halomonadaceae</taxon>
        <taxon>Chromohalobacter</taxon>
    </lineage>
</organism>
<gene>
    <name evidence="1" type="primary">rpoB</name>
    <name type="ordered locus">Csal_0414</name>
</gene>
<keyword id="KW-0240">DNA-directed RNA polymerase</keyword>
<keyword id="KW-0548">Nucleotidyltransferase</keyword>
<keyword id="KW-1185">Reference proteome</keyword>
<keyword id="KW-0804">Transcription</keyword>
<keyword id="KW-0808">Transferase</keyword>
<dbReference type="EC" id="2.7.7.6" evidence="1"/>
<dbReference type="EMBL" id="CP000285">
    <property type="protein sequence ID" value="ABE57776.1"/>
    <property type="molecule type" value="Genomic_DNA"/>
</dbReference>
<dbReference type="RefSeq" id="WP_011505722.1">
    <property type="nucleotide sequence ID" value="NC_007963.1"/>
</dbReference>
<dbReference type="SMR" id="Q1R0I2"/>
<dbReference type="STRING" id="290398.Csal_0414"/>
<dbReference type="GeneID" id="95333167"/>
<dbReference type="KEGG" id="csa:Csal_0414"/>
<dbReference type="eggNOG" id="COG0085">
    <property type="taxonomic scope" value="Bacteria"/>
</dbReference>
<dbReference type="HOGENOM" id="CLU_000524_4_0_6"/>
<dbReference type="OrthoDB" id="9803954at2"/>
<dbReference type="Proteomes" id="UP000000239">
    <property type="component" value="Chromosome"/>
</dbReference>
<dbReference type="GO" id="GO:0000428">
    <property type="term" value="C:DNA-directed RNA polymerase complex"/>
    <property type="evidence" value="ECO:0007669"/>
    <property type="project" value="UniProtKB-KW"/>
</dbReference>
<dbReference type="GO" id="GO:0003677">
    <property type="term" value="F:DNA binding"/>
    <property type="evidence" value="ECO:0007669"/>
    <property type="project" value="UniProtKB-UniRule"/>
</dbReference>
<dbReference type="GO" id="GO:0003899">
    <property type="term" value="F:DNA-directed RNA polymerase activity"/>
    <property type="evidence" value="ECO:0007669"/>
    <property type="project" value="UniProtKB-UniRule"/>
</dbReference>
<dbReference type="GO" id="GO:0032549">
    <property type="term" value="F:ribonucleoside binding"/>
    <property type="evidence" value="ECO:0007669"/>
    <property type="project" value="InterPro"/>
</dbReference>
<dbReference type="GO" id="GO:0006351">
    <property type="term" value="P:DNA-templated transcription"/>
    <property type="evidence" value="ECO:0007669"/>
    <property type="project" value="UniProtKB-UniRule"/>
</dbReference>
<dbReference type="CDD" id="cd00653">
    <property type="entry name" value="RNA_pol_B_RPB2"/>
    <property type="match status" value="1"/>
</dbReference>
<dbReference type="FunFam" id="2.40.50.100:FF:000006">
    <property type="entry name" value="DNA-directed RNA polymerase subunit beta"/>
    <property type="match status" value="1"/>
</dbReference>
<dbReference type="FunFam" id="3.90.1100.10:FF:000002">
    <property type="entry name" value="DNA-directed RNA polymerase subunit beta"/>
    <property type="match status" value="1"/>
</dbReference>
<dbReference type="FunFam" id="3.90.1110.10:FF:000001">
    <property type="entry name" value="DNA-directed RNA polymerase subunit beta"/>
    <property type="match status" value="1"/>
</dbReference>
<dbReference type="FunFam" id="3.90.1110.10:FF:000004">
    <property type="entry name" value="DNA-directed RNA polymerase subunit beta"/>
    <property type="match status" value="1"/>
</dbReference>
<dbReference type="FunFam" id="3.90.1800.10:FF:000001">
    <property type="entry name" value="DNA-directed RNA polymerase subunit beta"/>
    <property type="match status" value="1"/>
</dbReference>
<dbReference type="Gene3D" id="2.40.50.100">
    <property type="match status" value="1"/>
</dbReference>
<dbReference type="Gene3D" id="2.40.50.150">
    <property type="match status" value="1"/>
</dbReference>
<dbReference type="Gene3D" id="3.90.1100.10">
    <property type="match status" value="2"/>
</dbReference>
<dbReference type="Gene3D" id="6.10.140.1670">
    <property type="match status" value="1"/>
</dbReference>
<dbReference type="Gene3D" id="2.30.150.10">
    <property type="entry name" value="DNA-directed RNA polymerase, beta subunit, external 1 domain"/>
    <property type="match status" value="1"/>
</dbReference>
<dbReference type="Gene3D" id="2.40.270.10">
    <property type="entry name" value="DNA-directed RNA polymerase, subunit 2, domain 6"/>
    <property type="match status" value="1"/>
</dbReference>
<dbReference type="Gene3D" id="3.90.1800.10">
    <property type="entry name" value="RNA polymerase alpha subunit dimerisation domain"/>
    <property type="match status" value="1"/>
</dbReference>
<dbReference type="Gene3D" id="3.90.1110.10">
    <property type="entry name" value="RNA polymerase Rpb2, domain 2"/>
    <property type="match status" value="1"/>
</dbReference>
<dbReference type="HAMAP" id="MF_01321">
    <property type="entry name" value="RNApol_bact_RpoB"/>
    <property type="match status" value="1"/>
</dbReference>
<dbReference type="InterPro" id="IPR042107">
    <property type="entry name" value="DNA-dir_RNA_pol_bsu_ext_1_sf"/>
</dbReference>
<dbReference type="InterPro" id="IPR019462">
    <property type="entry name" value="DNA-dir_RNA_pol_bsu_external_1"/>
</dbReference>
<dbReference type="InterPro" id="IPR015712">
    <property type="entry name" value="DNA-dir_RNA_pol_su2"/>
</dbReference>
<dbReference type="InterPro" id="IPR007120">
    <property type="entry name" value="DNA-dir_RNAP_su2_dom"/>
</dbReference>
<dbReference type="InterPro" id="IPR037033">
    <property type="entry name" value="DNA-dir_RNAP_su2_hyb_sf"/>
</dbReference>
<dbReference type="InterPro" id="IPR010243">
    <property type="entry name" value="RNA_pol_bsu_bac"/>
</dbReference>
<dbReference type="InterPro" id="IPR007121">
    <property type="entry name" value="RNA_pol_bsu_CS"/>
</dbReference>
<dbReference type="InterPro" id="IPR007644">
    <property type="entry name" value="RNA_pol_bsu_protrusion"/>
</dbReference>
<dbReference type="InterPro" id="IPR007642">
    <property type="entry name" value="RNA_pol_Rpb2_2"/>
</dbReference>
<dbReference type="InterPro" id="IPR037034">
    <property type="entry name" value="RNA_pol_Rpb2_2_sf"/>
</dbReference>
<dbReference type="InterPro" id="IPR007645">
    <property type="entry name" value="RNA_pol_Rpb2_3"/>
</dbReference>
<dbReference type="InterPro" id="IPR007641">
    <property type="entry name" value="RNA_pol_Rpb2_7"/>
</dbReference>
<dbReference type="InterPro" id="IPR014724">
    <property type="entry name" value="RNA_pol_RPB2_OB-fold"/>
</dbReference>
<dbReference type="NCBIfam" id="NF001616">
    <property type="entry name" value="PRK00405.1"/>
    <property type="match status" value="1"/>
</dbReference>
<dbReference type="NCBIfam" id="TIGR02013">
    <property type="entry name" value="rpoB"/>
    <property type="match status" value="1"/>
</dbReference>
<dbReference type="PANTHER" id="PTHR20856">
    <property type="entry name" value="DNA-DIRECTED RNA POLYMERASE I SUBUNIT 2"/>
    <property type="match status" value="1"/>
</dbReference>
<dbReference type="Pfam" id="PF04563">
    <property type="entry name" value="RNA_pol_Rpb2_1"/>
    <property type="match status" value="1"/>
</dbReference>
<dbReference type="Pfam" id="PF04561">
    <property type="entry name" value="RNA_pol_Rpb2_2"/>
    <property type="match status" value="2"/>
</dbReference>
<dbReference type="Pfam" id="PF04565">
    <property type="entry name" value="RNA_pol_Rpb2_3"/>
    <property type="match status" value="1"/>
</dbReference>
<dbReference type="Pfam" id="PF10385">
    <property type="entry name" value="RNA_pol_Rpb2_45"/>
    <property type="match status" value="1"/>
</dbReference>
<dbReference type="Pfam" id="PF00562">
    <property type="entry name" value="RNA_pol_Rpb2_6"/>
    <property type="match status" value="1"/>
</dbReference>
<dbReference type="Pfam" id="PF04560">
    <property type="entry name" value="RNA_pol_Rpb2_7"/>
    <property type="match status" value="1"/>
</dbReference>
<dbReference type="SUPFAM" id="SSF64484">
    <property type="entry name" value="beta and beta-prime subunits of DNA dependent RNA-polymerase"/>
    <property type="match status" value="1"/>
</dbReference>
<dbReference type="PROSITE" id="PS01166">
    <property type="entry name" value="RNA_POL_BETA"/>
    <property type="match status" value="1"/>
</dbReference>
<sequence length="1358" mass="151639">MAYSYTEKKRIRKDFGKLPQVMDVPYLLAIQLDSYFDFLQQDRAIEERLDVGLHAAFKSVFPIESFSGNAALEYVSYRFGTPAFDVKECQLRGVTYSAPLRVKVRLIIYDKDSSTKAIKDIKEQEVYMGEIPLMTENGTFVVNGTERVIVSQLHRSPGVFFDHDKGKSHSSGKLLYSARIIPYRGSWLDFEFDPKDNVYVRIDRRRKLPATVLLRALGMSAEEILETFFDTSTFHIEKSGFSVELVPSRLRGETATFDIKDGEGNLIVEEGRRITQKHIRQMEKAGLERLDVPMEYLFGKTLAKDQVDPNTGELVCECNTEITPELLEKIGQAGITTLETLYTNDLDTGPFVSDTLKIDTTHSQLEALVEIYRMMRPGEPPTKEAAETLFHNLFFTEDRYDLSGVGRMKFNRRLRREGDTGSGVLDNQDILDVMRELINIRNGFGEVDDIDHLGNRRIRCVGEMAENQFRVGLVRVERAVKERLSMAESEGLMPQDLINAKPVAAAVKEFFGSSQLSQFMDQNNPLSEVTHKRRVSALGPGGLTRERAGFEVRDVHATHYGRLCPIETLEGPNIGLINSLATYSHTNSYGFLETPYRKVVDRQVTDEVVHLSAIEEGDFIIAQASATVDESNKLTDDLVQVRHKGETTFMAPDKVTLMDVSPRQVVSVAAALIPFLEHDDANRALMGSNMQRQAVPTLKAEKPLVGTGMERFVARDSGVCAVARRGGVIDSVDAKRIVVRINEDEIIGGEAGVDIYNLTKYVRSNQNTCMNQRPIVRPGDVVARGDILADGPSVDMGDLALGQNMRMAFMPWNGYNFEDSILISERVVEEDRFTSIHIQELTCVSRDTKLGAEEISSDIPNVGEAALGKLDDAGIVYIGAEVGAGDILVGKVTPKGETQLTPEEKLLRAIFGEKASDVKDTSLRAPTGMKGTVIDVQVFTRDGVEKDSRALSIEQSQLDEVRKDLQETYRIAEEATFERLKRALIGQPVNGGPKLKKGDTLDEAYLDELPRSQWFKLRMQDESLNELLAQADEQLENRRKEMDERFEDKKRKLTQGDDLAPGVLKIVKVYLAVKRRIQSGDKMAGRHGNKGVISSIMPIEDMPFDDNGEPVDVVLNPLGVPSRMNVGQILETHLGMAANGLGVKIDRMLRDARQQQVAEIRDFLGQVYNTAETRQEDIDSLSDDEIITLAKNLRSGVPVATPVFDGAKEHEIKHLLTLADLPDSGQMTLYDGRTGDAFDRQVTVGYMYMLKLNHLVDDKMHARSTGSYSLVTQQPLGGKAQFGGQRFGEMEVWALEAYGAAYTLQEMLTVKSDDVEGRTKMYKNIVDGDHSMQAGMPESFNVLVKEIRSLGIDIELEG</sequence>
<protein>
    <recommendedName>
        <fullName evidence="1">DNA-directed RNA polymerase subunit beta</fullName>
        <shortName evidence="1">RNAP subunit beta</shortName>
        <ecNumber evidence="1">2.7.7.6</ecNumber>
    </recommendedName>
    <alternativeName>
        <fullName evidence="1">RNA polymerase subunit beta</fullName>
    </alternativeName>
    <alternativeName>
        <fullName evidence="1">Transcriptase subunit beta</fullName>
    </alternativeName>
</protein>